<protein>
    <recommendedName>
        <fullName evidence="1">4-hydroxy-3-methylbut-2-enyl diphosphate reductase</fullName>
        <shortName evidence="1">HMBPP reductase</shortName>
        <ecNumber evidence="1">1.17.7.4</ecNumber>
    </recommendedName>
</protein>
<proteinExistence type="inferred from homology"/>
<gene>
    <name evidence="1" type="primary">ispH</name>
    <name type="ordered locus">BCI_0558</name>
</gene>
<name>ISPH_BAUCH</name>
<reference key="1">
    <citation type="journal article" date="2006" name="PLoS Biol.">
        <title>Metabolic complementarity and genomics of the dual bacterial symbiosis of sharpshooters.</title>
        <authorList>
            <person name="Wu D."/>
            <person name="Daugherty S.C."/>
            <person name="Van Aken S.E."/>
            <person name="Pai G.H."/>
            <person name="Watkins K.L."/>
            <person name="Khouri H."/>
            <person name="Tallon L.J."/>
            <person name="Zaborsky J.M."/>
            <person name="Dunbar H.E."/>
            <person name="Tran P.L."/>
            <person name="Moran N.A."/>
            <person name="Eisen J.A."/>
        </authorList>
    </citation>
    <scope>NUCLEOTIDE SEQUENCE [LARGE SCALE GENOMIC DNA]</scope>
</reference>
<accession>Q1LSS7</accession>
<evidence type="ECO:0000255" key="1">
    <source>
        <dbReference type="HAMAP-Rule" id="MF_00191"/>
    </source>
</evidence>
<dbReference type="EC" id="1.17.7.4" evidence="1"/>
<dbReference type="EMBL" id="CP000238">
    <property type="protein sequence ID" value="ABF14306.1"/>
    <property type="molecule type" value="Genomic_DNA"/>
</dbReference>
<dbReference type="RefSeq" id="WP_011520720.1">
    <property type="nucleotide sequence ID" value="NC_007984.1"/>
</dbReference>
<dbReference type="SMR" id="Q1LSS7"/>
<dbReference type="STRING" id="374463.BCI_0558"/>
<dbReference type="KEGG" id="bci:BCI_0558"/>
<dbReference type="HOGENOM" id="CLU_027486_1_0_6"/>
<dbReference type="OrthoDB" id="9804068at2"/>
<dbReference type="UniPathway" id="UPA00056">
    <property type="reaction ID" value="UER00097"/>
</dbReference>
<dbReference type="UniPathway" id="UPA00059">
    <property type="reaction ID" value="UER00105"/>
</dbReference>
<dbReference type="Proteomes" id="UP000002427">
    <property type="component" value="Chromosome"/>
</dbReference>
<dbReference type="GO" id="GO:0051539">
    <property type="term" value="F:4 iron, 4 sulfur cluster binding"/>
    <property type="evidence" value="ECO:0007669"/>
    <property type="project" value="UniProtKB-UniRule"/>
</dbReference>
<dbReference type="GO" id="GO:0051745">
    <property type="term" value="F:4-hydroxy-3-methylbut-2-enyl diphosphate reductase activity"/>
    <property type="evidence" value="ECO:0007669"/>
    <property type="project" value="UniProtKB-UniRule"/>
</dbReference>
<dbReference type="GO" id="GO:0046872">
    <property type="term" value="F:metal ion binding"/>
    <property type="evidence" value="ECO:0007669"/>
    <property type="project" value="UniProtKB-KW"/>
</dbReference>
<dbReference type="GO" id="GO:0050992">
    <property type="term" value="P:dimethylallyl diphosphate biosynthetic process"/>
    <property type="evidence" value="ECO:0007669"/>
    <property type="project" value="UniProtKB-UniRule"/>
</dbReference>
<dbReference type="GO" id="GO:0019288">
    <property type="term" value="P:isopentenyl diphosphate biosynthetic process, methylerythritol 4-phosphate pathway"/>
    <property type="evidence" value="ECO:0007669"/>
    <property type="project" value="UniProtKB-UniRule"/>
</dbReference>
<dbReference type="GO" id="GO:0016114">
    <property type="term" value="P:terpenoid biosynthetic process"/>
    <property type="evidence" value="ECO:0007669"/>
    <property type="project" value="UniProtKB-UniRule"/>
</dbReference>
<dbReference type="CDD" id="cd13944">
    <property type="entry name" value="lytB_ispH"/>
    <property type="match status" value="1"/>
</dbReference>
<dbReference type="Gene3D" id="3.40.50.11270">
    <property type="match status" value="1"/>
</dbReference>
<dbReference type="Gene3D" id="3.40.1010.20">
    <property type="entry name" value="4-hydroxy-3-methylbut-2-enyl diphosphate reductase, catalytic domain"/>
    <property type="match status" value="2"/>
</dbReference>
<dbReference type="HAMAP" id="MF_00191">
    <property type="entry name" value="IspH"/>
    <property type="match status" value="1"/>
</dbReference>
<dbReference type="InterPro" id="IPR003451">
    <property type="entry name" value="LytB/IspH"/>
</dbReference>
<dbReference type="NCBIfam" id="TIGR00216">
    <property type="entry name" value="ispH_lytB"/>
    <property type="match status" value="1"/>
</dbReference>
<dbReference type="NCBIfam" id="NF002188">
    <property type="entry name" value="PRK01045.1-2"/>
    <property type="match status" value="1"/>
</dbReference>
<dbReference type="NCBIfam" id="NF002190">
    <property type="entry name" value="PRK01045.1-4"/>
    <property type="match status" value="1"/>
</dbReference>
<dbReference type="PANTHER" id="PTHR30426">
    <property type="entry name" value="4-HYDROXY-3-METHYLBUT-2-ENYL DIPHOSPHATE REDUCTASE"/>
    <property type="match status" value="1"/>
</dbReference>
<dbReference type="PANTHER" id="PTHR30426:SF0">
    <property type="entry name" value="4-HYDROXY-3-METHYLBUT-2-ENYL DIPHOSPHATE REDUCTASE"/>
    <property type="match status" value="1"/>
</dbReference>
<dbReference type="Pfam" id="PF02401">
    <property type="entry name" value="LYTB"/>
    <property type="match status" value="1"/>
</dbReference>
<feature type="chain" id="PRO_1000021091" description="4-hydroxy-3-methylbut-2-enyl diphosphate reductase">
    <location>
        <begin position="1"/>
        <end position="313"/>
    </location>
</feature>
<feature type="active site" description="Proton donor" evidence="1">
    <location>
        <position position="126"/>
    </location>
</feature>
<feature type="binding site" evidence="1">
    <location>
        <position position="12"/>
    </location>
    <ligand>
        <name>[4Fe-4S] cluster</name>
        <dbReference type="ChEBI" id="CHEBI:49883"/>
    </ligand>
</feature>
<feature type="binding site" evidence="1">
    <location>
        <position position="41"/>
    </location>
    <ligand>
        <name>(2E)-4-hydroxy-3-methylbut-2-enyl diphosphate</name>
        <dbReference type="ChEBI" id="CHEBI:128753"/>
    </ligand>
</feature>
<feature type="binding site" evidence="1">
    <location>
        <position position="41"/>
    </location>
    <ligand>
        <name>dimethylallyl diphosphate</name>
        <dbReference type="ChEBI" id="CHEBI:57623"/>
    </ligand>
</feature>
<feature type="binding site" evidence="1">
    <location>
        <position position="41"/>
    </location>
    <ligand>
        <name>isopentenyl diphosphate</name>
        <dbReference type="ChEBI" id="CHEBI:128769"/>
    </ligand>
</feature>
<feature type="binding site" evidence="1">
    <location>
        <position position="74"/>
    </location>
    <ligand>
        <name>(2E)-4-hydroxy-3-methylbut-2-enyl diphosphate</name>
        <dbReference type="ChEBI" id="CHEBI:128753"/>
    </ligand>
</feature>
<feature type="binding site" evidence="1">
    <location>
        <position position="74"/>
    </location>
    <ligand>
        <name>dimethylallyl diphosphate</name>
        <dbReference type="ChEBI" id="CHEBI:57623"/>
    </ligand>
</feature>
<feature type="binding site" evidence="1">
    <location>
        <position position="74"/>
    </location>
    <ligand>
        <name>isopentenyl diphosphate</name>
        <dbReference type="ChEBI" id="CHEBI:128769"/>
    </ligand>
</feature>
<feature type="binding site" evidence="1">
    <location>
        <position position="96"/>
    </location>
    <ligand>
        <name>[4Fe-4S] cluster</name>
        <dbReference type="ChEBI" id="CHEBI:49883"/>
    </ligand>
</feature>
<feature type="binding site" evidence="1">
    <location>
        <position position="124"/>
    </location>
    <ligand>
        <name>(2E)-4-hydroxy-3-methylbut-2-enyl diphosphate</name>
        <dbReference type="ChEBI" id="CHEBI:128753"/>
    </ligand>
</feature>
<feature type="binding site" evidence="1">
    <location>
        <position position="124"/>
    </location>
    <ligand>
        <name>dimethylallyl diphosphate</name>
        <dbReference type="ChEBI" id="CHEBI:57623"/>
    </ligand>
</feature>
<feature type="binding site" evidence="1">
    <location>
        <position position="124"/>
    </location>
    <ligand>
        <name>isopentenyl diphosphate</name>
        <dbReference type="ChEBI" id="CHEBI:128769"/>
    </ligand>
</feature>
<feature type="binding site" evidence="1">
    <location>
        <position position="167"/>
    </location>
    <ligand>
        <name>(2E)-4-hydroxy-3-methylbut-2-enyl diphosphate</name>
        <dbReference type="ChEBI" id="CHEBI:128753"/>
    </ligand>
</feature>
<feature type="binding site" evidence="1">
    <location>
        <position position="197"/>
    </location>
    <ligand>
        <name>[4Fe-4S] cluster</name>
        <dbReference type="ChEBI" id="CHEBI:49883"/>
    </ligand>
</feature>
<feature type="binding site" evidence="1">
    <location>
        <position position="225"/>
    </location>
    <ligand>
        <name>(2E)-4-hydroxy-3-methylbut-2-enyl diphosphate</name>
        <dbReference type="ChEBI" id="CHEBI:128753"/>
    </ligand>
</feature>
<feature type="binding site" evidence="1">
    <location>
        <position position="225"/>
    </location>
    <ligand>
        <name>dimethylallyl diphosphate</name>
        <dbReference type="ChEBI" id="CHEBI:57623"/>
    </ligand>
</feature>
<feature type="binding site" evidence="1">
    <location>
        <position position="225"/>
    </location>
    <ligand>
        <name>isopentenyl diphosphate</name>
        <dbReference type="ChEBI" id="CHEBI:128769"/>
    </ligand>
</feature>
<feature type="binding site" evidence="1">
    <location>
        <position position="226"/>
    </location>
    <ligand>
        <name>(2E)-4-hydroxy-3-methylbut-2-enyl diphosphate</name>
        <dbReference type="ChEBI" id="CHEBI:128753"/>
    </ligand>
</feature>
<feature type="binding site" evidence="1">
    <location>
        <position position="226"/>
    </location>
    <ligand>
        <name>dimethylallyl diphosphate</name>
        <dbReference type="ChEBI" id="CHEBI:57623"/>
    </ligand>
</feature>
<feature type="binding site" evidence="1">
    <location>
        <position position="226"/>
    </location>
    <ligand>
        <name>isopentenyl diphosphate</name>
        <dbReference type="ChEBI" id="CHEBI:128769"/>
    </ligand>
</feature>
<feature type="binding site" evidence="1">
    <location>
        <position position="227"/>
    </location>
    <ligand>
        <name>(2E)-4-hydroxy-3-methylbut-2-enyl diphosphate</name>
        <dbReference type="ChEBI" id="CHEBI:128753"/>
    </ligand>
</feature>
<feature type="binding site" evidence="1">
    <location>
        <position position="227"/>
    </location>
    <ligand>
        <name>dimethylallyl diphosphate</name>
        <dbReference type="ChEBI" id="CHEBI:57623"/>
    </ligand>
</feature>
<feature type="binding site" evidence="1">
    <location>
        <position position="227"/>
    </location>
    <ligand>
        <name>isopentenyl diphosphate</name>
        <dbReference type="ChEBI" id="CHEBI:128769"/>
    </ligand>
</feature>
<feature type="binding site" evidence="1">
    <location>
        <position position="269"/>
    </location>
    <ligand>
        <name>(2E)-4-hydroxy-3-methylbut-2-enyl diphosphate</name>
        <dbReference type="ChEBI" id="CHEBI:128753"/>
    </ligand>
</feature>
<feature type="binding site" evidence="1">
    <location>
        <position position="269"/>
    </location>
    <ligand>
        <name>dimethylallyl diphosphate</name>
        <dbReference type="ChEBI" id="CHEBI:57623"/>
    </ligand>
</feature>
<feature type="binding site" evidence="1">
    <location>
        <position position="269"/>
    </location>
    <ligand>
        <name>isopentenyl diphosphate</name>
        <dbReference type="ChEBI" id="CHEBI:128769"/>
    </ligand>
</feature>
<comment type="function">
    <text evidence="1">Catalyzes the conversion of 1-hydroxy-2-methyl-2-(E)-butenyl 4-diphosphate (HMBPP) into a mixture of isopentenyl diphosphate (IPP) and dimethylallyl diphosphate (DMAPP). Acts in the terminal step of the DOXP/MEP pathway for isoprenoid precursor biosynthesis.</text>
</comment>
<comment type="catalytic activity">
    <reaction evidence="1">
        <text>isopentenyl diphosphate + 2 oxidized [2Fe-2S]-[ferredoxin] + H2O = (2E)-4-hydroxy-3-methylbut-2-enyl diphosphate + 2 reduced [2Fe-2S]-[ferredoxin] + 2 H(+)</text>
        <dbReference type="Rhea" id="RHEA:24488"/>
        <dbReference type="Rhea" id="RHEA-COMP:10000"/>
        <dbReference type="Rhea" id="RHEA-COMP:10001"/>
        <dbReference type="ChEBI" id="CHEBI:15377"/>
        <dbReference type="ChEBI" id="CHEBI:15378"/>
        <dbReference type="ChEBI" id="CHEBI:33737"/>
        <dbReference type="ChEBI" id="CHEBI:33738"/>
        <dbReference type="ChEBI" id="CHEBI:128753"/>
        <dbReference type="ChEBI" id="CHEBI:128769"/>
        <dbReference type="EC" id="1.17.7.4"/>
    </reaction>
</comment>
<comment type="catalytic activity">
    <reaction evidence="1">
        <text>dimethylallyl diphosphate + 2 oxidized [2Fe-2S]-[ferredoxin] + H2O = (2E)-4-hydroxy-3-methylbut-2-enyl diphosphate + 2 reduced [2Fe-2S]-[ferredoxin] + 2 H(+)</text>
        <dbReference type="Rhea" id="RHEA:24825"/>
        <dbReference type="Rhea" id="RHEA-COMP:10000"/>
        <dbReference type="Rhea" id="RHEA-COMP:10001"/>
        <dbReference type="ChEBI" id="CHEBI:15377"/>
        <dbReference type="ChEBI" id="CHEBI:15378"/>
        <dbReference type="ChEBI" id="CHEBI:33737"/>
        <dbReference type="ChEBI" id="CHEBI:33738"/>
        <dbReference type="ChEBI" id="CHEBI:57623"/>
        <dbReference type="ChEBI" id="CHEBI:128753"/>
        <dbReference type="EC" id="1.17.7.4"/>
    </reaction>
</comment>
<comment type="cofactor">
    <cofactor evidence="1">
        <name>[4Fe-4S] cluster</name>
        <dbReference type="ChEBI" id="CHEBI:49883"/>
    </cofactor>
    <text evidence="1">Binds 1 [4Fe-4S] cluster per subunit.</text>
</comment>
<comment type="pathway">
    <text evidence="1">Isoprenoid biosynthesis; dimethylallyl diphosphate biosynthesis; dimethylallyl diphosphate from (2E)-4-hydroxy-3-methylbutenyl diphosphate: step 1/1.</text>
</comment>
<comment type="pathway">
    <text evidence="1">Isoprenoid biosynthesis; isopentenyl diphosphate biosynthesis via DXP pathway; isopentenyl diphosphate from 1-deoxy-D-xylulose 5-phosphate: step 6/6.</text>
</comment>
<comment type="similarity">
    <text evidence="1">Belongs to the IspH family.</text>
</comment>
<keyword id="KW-0004">4Fe-4S</keyword>
<keyword id="KW-0408">Iron</keyword>
<keyword id="KW-0411">Iron-sulfur</keyword>
<keyword id="KW-0414">Isoprene biosynthesis</keyword>
<keyword id="KW-0479">Metal-binding</keyword>
<keyword id="KW-0560">Oxidoreductase</keyword>
<keyword id="KW-1185">Reference proteome</keyword>
<organism>
    <name type="scientific">Baumannia cicadellinicola subsp. Homalodisca coagulata</name>
    <dbReference type="NCBI Taxonomy" id="374463"/>
    <lineage>
        <taxon>Bacteria</taxon>
        <taxon>Pseudomonadati</taxon>
        <taxon>Pseudomonadota</taxon>
        <taxon>Gammaproteobacteria</taxon>
        <taxon>Candidatus Palibaumannia</taxon>
    </lineage>
</organism>
<sequence length="313" mass="34712">MRILLANPRGFCAGVERAINIVEKVIAIYGPPIYVRHELVHNSYVVNTLRNQGVVFIEQIHEVPDGAVIIFSAHGVSKAIRKEVQSRNLTIFDATCPLVTKVHMEVARASHKGIETILIGHYGHPEVEGTIGQYNNTDGGIYLVESLEDVWQLKVKNKNNLCFITQTTFSVDKSSAIIDALRQRFPFIKGPHKQDICYATTNRQEAVRNLTMATDIVLVVGSKNSSNSNRLVELAQQTGKPAYLIDCASDIKENWLQGINIIGVTAGASAPNILVLQVILKLQSFGAESAEELRGYEEKMIFDLPRNLHVVNK</sequence>